<evidence type="ECO:0000255" key="1">
    <source>
        <dbReference type="HAMAP-Rule" id="MF_00294"/>
    </source>
</evidence>
<evidence type="ECO:0000305" key="2"/>
<evidence type="ECO:0007829" key="3">
    <source>
        <dbReference type="PDB" id="8A57"/>
    </source>
</evidence>
<protein>
    <recommendedName>
        <fullName evidence="1">Large ribosomal subunit protein bL33A</fullName>
    </recommendedName>
    <alternativeName>
        <fullName>50S ribosomal protein L33 1</fullName>
    </alternativeName>
</protein>
<dbReference type="EMBL" id="AL591978">
    <property type="protein sequence ID" value="CAC99413.1"/>
    <property type="molecule type" value="Genomic_DNA"/>
</dbReference>
<dbReference type="PIR" id="AG1241">
    <property type="entry name" value="AG1241"/>
</dbReference>
<dbReference type="PDB" id="7NHN">
    <property type="method" value="EM"/>
    <property type="resolution" value="2.90 A"/>
    <property type="chains" value="6=1-49"/>
</dbReference>
<dbReference type="PDB" id="8A57">
    <property type="method" value="EM"/>
    <property type="resolution" value="2.30 A"/>
    <property type="chains" value="6=1-49"/>
</dbReference>
<dbReference type="PDB" id="8A5I">
    <property type="method" value="EM"/>
    <property type="resolution" value="2.30 A"/>
    <property type="chains" value="6=1-49"/>
</dbReference>
<dbReference type="PDB" id="8A63">
    <property type="method" value="EM"/>
    <property type="resolution" value="3.10 A"/>
    <property type="chains" value="6=1-49"/>
</dbReference>
<dbReference type="PDBsum" id="7NHN"/>
<dbReference type="PDBsum" id="8A57"/>
<dbReference type="PDBsum" id="8A5I"/>
<dbReference type="PDBsum" id="8A63"/>
<dbReference type="EMDB" id="EMD-12334"/>
<dbReference type="EMDB" id="EMD-15161"/>
<dbReference type="EMDB" id="EMD-15175"/>
<dbReference type="EMDB" id="EMD-15204"/>
<dbReference type="SMR" id="P66219"/>
<dbReference type="STRING" id="169963.gene:17593992"/>
<dbReference type="PaxDb" id="169963-lmo1335"/>
<dbReference type="EnsemblBacteria" id="CAC99413">
    <property type="protein sequence ID" value="CAC99413"/>
    <property type="gene ID" value="CAC99413"/>
</dbReference>
<dbReference type="KEGG" id="lmo:lmo1335"/>
<dbReference type="PATRIC" id="fig|169963.11.peg.1372"/>
<dbReference type="eggNOG" id="COG0267">
    <property type="taxonomic scope" value="Bacteria"/>
</dbReference>
<dbReference type="HOGENOM" id="CLU_190949_0_2_9"/>
<dbReference type="OrthoDB" id="197660at2"/>
<dbReference type="PhylomeDB" id="P66219"/>
<dbReference type="BioCyc" id="LMON169963:LMO1335-MONOMER"/>
<dbReference type="Proteomes" id="UP000000817">
    <property type="component" value="Chromosome"/>
</dbReference>
<dbReference type="GO" id="GO:0005737">
    <property type="term" value="C:cytoplasm"/>
    <property type="evidence" value="ECO:0007669"/>
    <property type="project" value="UniProtKB-ARBA"/>
</dbReference>
<dbReference type="GO" id="GO:1990904">
    <property type="term" value="C:ribonucleoprotein complex"/>
    <property type="evidence" value="ECO:0007669"/>
    <property type="project" value="UniProtKB-KW"/>
</dbReference>
<dbReference type="GO" id="GO:0005840">
    <property type="term" value="C:ribosome"/>
    <property type="evidence" value="ECO:0007669"/>
    <property type="project" value="UniProtKB-KW"/>
</dbReference>
<dbReference type="GO" id="GO:0003735">
    <property type="term" value="F:structural constituent of ribosome"/>
    <property type="evidence" value="ECO:0007669"/>
    <property type="project" value="InterPro"/>
</dbReference>
<dbReference type="GO" id="GO:0006412">
    <property type="term" value="P:translation"/>
    <property type="evidence" value="ECO:0007669"/>
    <property type="project" value="UniProtKB-UniRule"/>
</dbReference>
<dbReference type="Gene3D" id="2.20.28.120">
    <property type="entry name" value="Ribosomal protein L33"/>
    <property type="match status" value="1"/>
</dbReference>
<dbReference type="HAMAP" id="MF_00294">
    <property type="entry name" value="Ribosomal_bL33"/>
    <property type="match status" value="1"/>
</dbReference>
<dbReference type="InterPro" id="IPR001705">
    <property type="entry name" value="Ribosomal_bL33"/>
</dbReference>
<dbReference type="InterPro" id="IPR018264">
    <property type="entry name" value="Ribosomal_bL33_CS"/>
</dbReference>
<dbReference type="InterPro" id="IPR038584">
    <property type="entry name" value="Ribosomal_bL33_sf"/>
</dbReference>
<dbReference type="InterPro" id="IPR011332">
    <property type="entry name" value="Ribosomal_zn-bd"/>
</dbReference>
<dbReference type="NCBIfam" id="NF001764">
    <property type="entry name" value="PRK00504.1"/>
    <property type="match status" value="1"/>
</dbReference>
<dbReference type="NCBIfam" id="NF001860">
    <property type="entry name" value="PRK00595.1"/>
    <property type="match status" value="1"/>
</dbReference>
<dbReference type="NCBIfam" id="TIGR01023">
    <property type="entry name" value="rpmG_bact"/>
    <property type="match status" value="1"/>
</dbReference>
<dbReference type="PANTHER" id="PTHR43168">
    <property type="entry name" value="50S RIBOSOMAL PROTEIN L33, CHLOROPLASTIC"/>
    <property type="match status" value="1"/>
</dbReference>
<dbReference type="PANTHER" id="PTHR43168:SF2">
    <property type="entry name" value="LARGE RIBOSOMAL SUBUNIT PROTEIN BL33C"/>
    <property type="match status" value="1"/>
</dbReference>
<dbReference type="Pfam" id="PF00471">
    <property type="entry name" value="Ribosomal_L33"/>
    <property type="match status" value="1"/>
</dbReference>
<dbReference type="SUPFAM" id="SSF57829">
    <property type="entry name" value="Zn-binding ribosomal proteins"/>
    <property type="match status" value="1"/>
</dbReference>
<dbReference type="PROSITE" id="PS00582">
    <property type="entry name" value="RIBOSOMAL_L33"/>
    <property type="match status" value="1"/>
</dbReference>
<reference key="1">
    <citation type="journal article" date="2001" name="Science">
        <title>Comparative genomics of Listeria species.</title>
        <authorList>
            <person name="Glaser P."/>
            <person name="Frangeul L."/>
            <person name="Buchrieser C."/>
            <person name="Rusniok C."/>
            <person name="Amend A."/>
            <person name="Baquero F."/>
            <person name="Berche P."/>
            <person name="Bloecker H."/>
            <person name="Brandt P."/>
            <person name="Chakraborty T."/>
            <person name="Charbit A."/>
            <person name="Chetouani F."/>
            <person name="Couve E."/>
            <person name="de Daruvar A."/>
            <person name="Dehoux P."/>
            <person name="Domann E."/>
            <person name="Dominguez-Bernal G."/>
            <person name="Duchaud E."/>
            <person name="Durant L."/>
            <person name="Dussurget O."/>
            <person name="Entian K.-D."/>
            <person name="Fsihi H."/>
            <person name="Garcia-del Portillo F."/>
            <person name="Garrido P."/>
            <person name="Gautier L."/>
            <person name="Goebel W."/>
            <person name="Gomez-Lopez N."/>
            <person name="Hain T."/>
            <person name="Hauf J."/>
            <person name="Jackson D."/>
            <person name="Jones L.-M."/>
            <person name="Kaerst U."/>
            <person name="Kreft J."/>
            <person name="Kuhn M."/>
            <person name="Kunst F."/>
            <person name="Kurapkat G."/>
            <person name="Madueno E."/>
            <person name="Maitournam A."/>
            <person name="Mata Vicente J."/>
            <person name="Ng E."/>
            <person name="Nedjari H."/>
            <person name="Nordsiek G."/>
            <person name="Novella S."/>
            <person name="de Pablos B."/>
            <person name="Perez-Diaz J.-C."/>
            <person name="Purcell R."/>
            <person name="Remmel B."/>
            <person name="Rose M."/>
            <person name="Schlueter T."/>
            <person name="Simoes N."/>
            <person name="Tierrez A."/>
            <person name="Vazquez-Boland J.-A."/>
            <person name="Voss H."/>
            <person name="Wehland J."/>
            <person name="Cossart P."/>
        </authorList>
    </citation>
    <scope>NUCLEOTIDE SEQUENCE [LARGE SCALE GENOMIC DNA]</scope>
    <source>
        <strain>ATCC BAA-679 / EGD-e</strain>
    </source>
</reference>
<accession>P66219</accession>
<accession>Q92C19</accession>
<gene>
    <name type="primary">rpmG1</name>
    <name type="ordered locus">lmo1335</name>
</gene>
<feature type="chain" id="PRO_0000170181" description="Large ribosomal subunit protein bL33A">
    <location>
        <begin position="1"/>
        <end position="49"/>
    </location>
</feature>
<feature type="strand" evidence="3">
    <location>
        <begin position="3"/>
        <end position="12"/>
    </location>
</feature>
<feature type="strand" evidence="3">
    <location>
        <begin position="17"/>
        <end position="21"/>
    </location>
</feature>
<feature type="turn" evidence="3">
    <location>
        <begin position="23"/>
        <end position="25"/>
    </location>
</feature>
<feature type="strand" evidence="3">
    <location>
        <begin position="31"/>
        <end position="36"/>
    </location>
</feature>
<feature type="turn" evidence="3">
    <location>
        <begin position="37"/>
        <end position="40"/>
    </location>
</feature>
<feature type="strand" evidence="3">
    <location>
        <begin position="41"/>
        <end position="47"/>
    </location>
</feature>
<proteinExistence type="evidence at protein level"/>
<organism>
    <name type="scientific">Listeria monocytogenes serovar 1/2a (strain ATCC BAA-679 / EGD-e)</name>
    <dbReference type="NCBI Taxonomy" id="169963"/>
    <lineage>
        <taxon>Bacteria</taxon>
        <taxon>Bacillati</taxon>
        <taxon>Bacillota</taxon>
        <taxon>Bacilli</taxon>
        <taxon>Bacillales</taxon>
        <taxon>Listeriaceae</taxon>
        <taxon>Listeria</taxon>
    </lineage>
</organism>
<comment type="similarity">
    <text evidence="2">Belongs to the bacterial ribosomal protein bL33 family.</text>
</comment>
<name>RL331_LISMO</name>
<keyword id="KW-0002">3D-structure</keyword>
<keyword id="KW-1185">Reference proteome</keyword>
<keyword id="KW-0687">Ribonucleoprotein</keyword>
<keyword id="KW-0689">Ribosomal protein</keyword>
<sequence>MRVNITLECTECGDRNYITTKNKRENPERIELKKYCPRLRRVTLHRETK</sequence>